<gene>
    <name evidence="1" type="primary">gluQ</name>
    <name type="ordered locus">Z0155</name>
    <name type="ordered locus">ECs0148</name>
</gene>
<reference key="1">
    <citation type="journal article" date="2001" name="Nature">
        <title>Genome sequence of enterohaemorrhagic Escherichia coli O157:H7.</title>
        <authorList>
            <person name="Perna N.T."/>
            <person name="Plunkett G. III"/>
            <person name="Burland V."/>
            <person name="Mau B."/>
            <person name="Glasner J.D."/>
            <person name="Rose D.J."/>
            <person name="Mayhew G.F."/>
            <person name="Evans P.S."/>
            <person name="Gregor J."/>
            <person name="Kirkpatrick H.A."/>
            <person name="Posfai G."/>
            <person name="Hackett J."/>
            <person name="Klink S."/>
            <person name="Boutin A."/>
            <person name="Shao Y."/>
            <person name="Miller L."/>
            <person name="Grotbeck E.J."/>
            <person name="Davis N.W."/>
            <person name="Lim A."/>
            <person name="Dimalanta E.T."/>
            <person name="Potamousis K."/>
            <person name="Apodaca J."/>
            <person name="Anantharaman T.S."/>
            <person name="Lin J."/>
            <person name="Yen G."/>
            <person name="Schwartz D.C."/>
            <person name="Welch R.A."/>
            <person name="Blattner F.R."/>
        </authorList>
    </citation>
    <scope>NUCLEOTIDE SEQUENCE [LARGE SCALE GENOMIC DNA]</scope>
    <source>
        <strain>O157:H7 / EDL933 / ATCC 700927 / EHEC</strain>
    </source>
</reference>
<reference key="2">
    <citation type="journal article" date="2001" name="DNA Res.">
        <title>Complete genome sequence of enterohemorrhagic Escherichia coli O157:H7 and genomic comparison with a laboratory strain K-12.</title>
        <authorList>
            <person name="Hayashi T."/>
            <person name="Makino K."/>
            <person name="Ohnishi M."/>
            <person name="Kurokawa K."/>
            <person name="Ishii K."/>
            <person name="Yokoyama K."/>
            <person name="Han C.-G."/>
            <person name="Ohtsubo E."/>
            <person name="Nakayama K."/>
            <person name="Murata T."/>
            <person name="Tanaka M."/>
            <person name="Tobe T."/>
            <person name="Iida T."/>
            <person name="Takami H."/>
            <person name="Honda T."/>
            <person name="Sasakawa C."/>
            <person name="Ogasawara N."/>
            <person name="Yasunaga T."/>
            <person name="Kuhara S."/>
            <person name="Shiba T."/>
            <person name="Hattori M."/>
            <person name="Shinagawa H."/>
        </authorList>
    </citation>
    <scope>NUCLEOTIDE SEQUENCE [LARGE SCALE GENOMIC DNA]</scope>
    <source>
        <strain>O157:H7 / Sakai / RIMD 0509952 / EHEC</strain>
    </source>
</reference>
<feature type="chain" id="PRO_0000208301" description="Glutamyl-Q tRNA(Asp) synthetase">
    <location>
        <begin position="1"/>
        <end position="308"/>
    </location>
</feature>
<feature type="short sequence motif" description="'HIGH' region">
    <location>
        <begin position="22"/>
        <end position="32"/>
    </location>
</feature>
<feature type="short sequence motif" description="'KMSKS' region">
    <location>
        <begin position="238"/>
        <end position="242"/>
    </location>
</feature>
<feature type="binding site" evidence="1">
    <location>
        <begin position="19"/>
        <end position="23"/>
    </location>
    <ligand>
        <name>L-glutamate</name>
        <dbReference type="ChEBI" id="CHEBI:29985"/>
    </ligand>
</feature>
<feature type="binding site" evidence="1">
    <location>
        <position position="55"/>
    </location>
    <ligand>
        <name>L-glutamate</name>
        <dbReference type="ChEBI" id="CHEBI:29985"/>
    </ligand>
</feature>
<feature type="binding site" evidence="1">
    <location>
        <position position="111"/>
    </location>
    <ligand>
        <name>Zn(2+)</name>
        <dbReference type="ChEBI" id="CHEBI:29105"/>
    </ligand>
</feature>
<feature type="binding site" evidence="1">
    <location>
        <position position="113"/>
    </location>
    <ligand>
        <name>Zn(2+)</name>
        <dbReference type="ChEBI" id="CHEBI:29105"/>
    </ligand>
</feature>
<feature type="binding site" evidence="1">
    <location>
        <position position="125"/>
    </location>
    <ligand>
        <name>Zn(2+)</name>
        <dbReference type="ChEBI" id="CHEBI:29105"/>
    </ligand>
</feature>
<feature type="binding site" evidence="1">
    <location>
        <position position="129"/>
    </location>
    <ligand>
        <name>Zn(2+)</name>
        <dbReference type="ChEBI" id="CHEBI:29105"/>
    </ligand>
</feature>
<feature type="binding site" evidence="1">
    <location>
        <position position="182"/>
    </location>
    <ligand>
        <name>L-glutamate</name>
        <dbReference type="ChEBI" id="CHEBI:29985"/>
    </ligand>
</feature>
<feature type="binding site" evidence="1">
    <location>
        <position position="200"/>
    </location>
    <ligand>
        <name>L-glutamate</name>
        <dbReference type="ChEBI" id="CHEBI:29985"/>
    </ligand>
</feature>
<feature type="binding site" evidence="1">
    <location>
        <position position="241"/>
    </location>
    <ligand>
        <name>ATP</name>
        <dbReference type="ChEBI" id="CHEBI:30616"/>
    </ligand>
</feature>
<name>GLUQ_ECO57</name>
<sequence>MLPPYFLFKEMTDTQYIGRFAPSPSGELHFGSLIAALGSYLQARARHGRWLVRIEDIDPPREVPGAAETILRQLEHYGLHWDGDVLWQSQRHHAYREALAWLHEQGLSYYCTCTRARIQSIGGIYDGHCRVLHHGPDNAAVRIRQQHPVTQFTDQLRGIIHADEKLAREDFIIHRRDGLFAYNLAVVVDDHFQGVSEIVRGADLIEPTVRQISLYQLFGWKVPDYIHLPLALNPQGAKLSKQNHAPALPKGDPRPVLIAALQFLGQQAEAHWQDFSVEQILQSAVKNWRLTAVPESAIVNSTFSNASC</sequence>
<organism>
    <name type="scientific">Escherichia coli O157:H7</name>
    <dbReference type="NCBI Taxonomy" id="83334"/>
    <lineage>
        <taxon>Bacteria</taxon>
        <taxon>Pseudomonadati</taxon>
        <taxon>Pseudomonadota</taxon>
        <taxon>Gammaproteobacteria</taxon>
        <taxon>Enterobacterales</taxon>
        <taxon>Enterobacteriaceae</taxon>
        <taxon>Escherichia</taxon>
    </lineage>
</organism>
<dbReference type="EC" id="6.1.1.-" evidence="1"/>
<dbReference type="EMBL" id="AE005174">
    <property type="protein sequence ID" value="AAG54448.1"/>
    <property type="molecule type" value="Genomic_DNA"/>
</dbReference>
<dbReference type="EMBL" id="BA000007">
    <property type="protein sequence ID" value="BAB33571.1"/>
    <property type="molecule type" value="Genomic_DNA"/>
</dbReference>
<dbReference type="PIR" id="D85498">
    <property type="entry name" value="D85498"/>
</dbReference>
<dbReference type="PIR" id="D90647">
    <property type="entry name" value="D90647"/>
</dbReference>
<dbReference type="RefSeq" id="NP_308175.3">
    <property type="nucleotide sequence ID" value="NC_002695.1"/>
</dbReference>
<dbReference type="SMR" id="Q8X909"/>
<dbReference type="STRING" id="155864.Z0155"/>
<dbReference type="GeneID" id="913766"/>
<dbReference type="KEGG" id="ece:Z0155"/>
<dbReference type="KEGG" id="ecs:ECs_0148"/>
<dbReference type="PATRIC" id="fig|386585.9.peg.247"/>
<dbReference type="eggNOG" id="COG0008">
    <property type="taxonomic scope" value="Bacteria"/>
</dbReference>
<dbReference type="HOGENOM" id="CLU_015768_0_1_6"/>
<dbReference type="OMA" id="WLLRMED"/>
<dbReference type="Proteomes" id="UP000000558">
    <property type="component" value="Chromosome"/>
</dbReference>
<dbReference type="Proteomes" id="UP000002519">
    <property type="component" value="Chromosome"/>
</dbReference>
<dbReference type="GO" id="GO:0005829">
    <property type="term" value="C:cytosol"/>
    <property type="evidence" value="ECO:0007669"/>
    <property type="project" value="TreeGrafter"/>
</dbReference>
<dbReference type="GO" id="GO:0005524">
    <property type="term" value="F:ATP binding"/>
    <property type="evidence" value="ECO:0007669"/>
    <property type="project" value="UniProtKB-KW"/>
</dbReference>
<dbReference type="GO" id="GO:0004818">
    <property type="term" value="F:glutamate-tRNA ligase activity"/>
    <property type="evidence" value="ECO:0007669"/>
    <property type="project" value="TreeGrafter"/>
</dbReference>
<dbReference type="GO" id="GO:0008270">
    <property type="term" value="F:zinc ion binding"/>
    <property type="evidence" value="ECO:0007669"/>
    <property type="project" value="UniProtKB-UniRule"/>
</dbReference>
<dbReference type="GO" id="GO:0006424">
    <property type="term" value="P:glutamyl-tRNA aminoacylation"/>
    <property type="evidence" value="ECO:0007669"/>
    <property type="project" value="InterPro"/>
</dbReference>
<dbReference type="GO" id="GO:0006400">
    <property type="term" value="P:tRNA modification"/>
    <property type="evidence" value="ECO:0007669"/>
    <property type="project" value="InterPro"/>
</dbReference>
<dbReference type="FunFam" id="3.40.50.620:FF:000093">
    <property type="entry name" value="Glutamyl-Q tRNA(Asp) synthetase"/>
    <property type="match status" value="1"/>
</dbReference>
<dbReference type="Gene3D" id="3.40.50.620">
    <property type="entry name" value="HUPs"/>
    <property type="match status" value="1"/>
</dbReference>
<dbReference type="HAMAP" id="MF_01428">
    <property type="entry name" value="Glu_Q_tRNA_synth"/>
    <property type="match status" value="1"/>
</dbReference>
<dbReference type="InterPro" id="IPR022380">
    <property type="entry name" value="Glu-Q_tRNA(Asp)_Synthase"/>
</dbReference>
<dbReference type="InterPro" id="IPR000924">
    <property type="entry name" value="Glu/Gln-tRNA-synth"/>
</dbReference>
<dbReference type="InterPro" id="IPR020058">
    <property type="entry name" value="Glu/Gln-tRNA-synth_Ib_cat-dom"/>
</dbReference>
<dbReference type="InterPro" id="IPR049940">
    <property type="entry name" value="GluQ/Sye"/>
</dbReference>
<dbReference type="InterPro" id="IPR014729">
    <property type="entry name" value="Rossmann-like_a/b/a_fold"/>
</dbReference>
<dbReference type="NCBIfam" id="NF004312">
    <property type="entry name" value="PRK05710.1-1"/>
    <property type="match status" value="1"/>
</dbReference>
<dbReference type="NCBIfam" id="NF004314">
    <property type="entry name" value="PRK05710.1-3"/>
    <property type="match status" value="1"/>
</dbReference>
<dbReference type="NCBIfam" id="TIGR03838">
    <property type="entry name" value="queuosine_YadB"/>
    <property type="match status" value="1"/>
</dbReference>
<dbReference type="PANTHER" id="PTHR43311">
    <property type="entry name" value="GLUTAMATE--TRNA LIGASE"/>
    <property type="match status" value="1"/>
</dbReference>
<dbReference type="PANTHER" id="PTHR43311:SF1">
    <property type="entry name" value="GLUTAMYL-Q TRNA(ASP) SYNTHETASE"/>
    <property type="match status" value="1"/>
</dbReference>
<dbReference type="Pfam" id="PF00749">
    <property type="entry name" value="tRNA-synt_1c"/>
    <property type="match status" value="1"/>
</dbReference>
<dbReference type="PRINTS" id="PR00987">
    <property type="entry name" value="TRNASYNTHGLU"/>
</dbReference>
<dbReference type="SUPFAM" id="SSF52374">
    <property type="entry name" value="Nucleotidylyl transferase"/>
    <property type="match status" value="1"/>
</dbReference>
<keyword id="KW-0030">Aminoacyl-tRNA synthetase</keyword>
<keyword id="KW-0067">ATP-binding</keyword>
<keyword id="KW-0436">Ligase</keyword>
<keyword id="KW-0479">Metal-binding</keyword>
<keyword id="KW-0547">Nucleotide-binding</keyword>
<keyword id="KW-1185">Reference proteome</keyword>
<keyword id="KW-0862">Zinc</keyword>
<accession>Q8X909</accession>
<accession>Q7AHN1</accession>
<protein>
    <recommendedName>
        <fullName evidence="1">Glutamyl-Q tRNA(Asp) synthetase</fullName>
        <shortName evidence="1">Glu-Q-RSs</shortName>
        <ecNumber evidence="1">6.1.1.-</ecNumber>
    </recommendedName>
</protein>
<evidence type="ECO:0000255" key="1">
    <source>
        <dbReference type="HAMAP-Rule" id="MF_01428"/>
    </source>
</evidence>
<comment type="function">
    <text evidence="1">Catalyzes the tRNA-independent activation of glutamate in presence of ATP and the subsequent transfer of glutamate onto a tRNA(Asp). Glutamate is transferred on the 2-amino-5-(4,5-dihydroxy-2-cyclopenten-1-yl) moiety of the queuosine in the wobble position of the QUC anticodon.</text>
</comment>
<comment type="cofactor">
    <cofactor evidence="1">
        <name>Zn(2+)</name>
        <dbReference type="ChEBI" id="CHEBI:29105"/>
    </cofactor>
    <text evidence="1">Binds 1 zinc ion per subunit.</text>
</comment>
<comment type="similarity">
    <text evidence="1">Belongs to the class-I aminoacyl-tRNA synthetase family. GluQ subfamily.</text>
</comment>
<proteinExistence type="inferred from homology"/>